<name>CWC24_YEAST</name>
<protein>
    <recommendedName>
        <fullName>Pre-mRNA-splicing factor CWC24</fullName>
    </recommendedName>
    <alternativeName>
        <fullName>Complexed with CEF1 protein 24</fullName>
    </alternativeName>
</protein>
<gene>
    <name type="primary">CWC24</name>
    <name type="ordered locus">YLR323C</name>
    <name type="ORF">L8543.3</name>
</gene>
<proteinExistence type="evidence at protein level"/>
<sequence>MFRKRLVNKSSSDEKNQKKRQKINFSEEKLVASDEEKGSSDLMSLAKSGNSRTLQLSHENEGKLQKKGEDLDKYTLTVNDDSTKEDLLNFERKELAEKAKKRRPSDDNELVLNMSGKNKRLTKQINQPTNIRTTVLMDFQPDVCKDYKQTGYCGYGDSCKFLHSRDDFKTGWKLNQEWNADKEDSKAVTLDLEKIPFKCTLCKEDYKSPVVTNCGHYFCGSCFAKDMKKGTKCFICHKETHGSAKVASDLQKMLNKRKS</sequence>
<evidence type="ECO:0000255" key="1">
    <source>
        <dbReference type="PROSITE-ProRule" id="PRU00175"/>
    </source>
</evidence>
<evidence type="ECO:0000255" key="2">
    <source>
        <dbReference type="PROSITE-ProRule" id="PRU00723"/>
    </source>
</evidence>
<evidence type="ECO:0000256" key="3">
    <source>
        <dbReference type="SAM" id="MobiDB-lite"/>
    </source>
</evidence>
<evidence type="ECO:0000269" key="4">
    <source>
    </source>
</evidence>
<evidence type="ECO:0000269" key="5">
    <source>
    </source>
</evidence>
<evidence type="ECO:0000269" key="6">
    <source>
    </source>
</evidence>
<evidence type="ECO:0000305" key="7"/>
<evidence type="ECO:0007744" key="8">
    <source>
    </source>
</evidence>
<evidence type="ECO:0007744" key="9">
    <source>
    </source>
</evidence>
<evidence type="ECO:0007744" key="10">
    <source>
    </source>
</evidence>
<evidence type="ECO:0007744" key="11">
    <source>
    </source>
</evidence>
<keyword id="KW-0002">3D-structure</keyword>
<keyword id="KW-0238">DNA-binding</keyword>
<keyword id="KW-0479">Metal-binding</keyword>
<keyword id="KW-0507">mRNA processing</keyword>
<keyword id="KW-0508">mRNA splicing</keyword>
<keyword id="KW-0539">Nucleus</keyword>
<keyword id="KW-0597">Phosphoprotein</keyword>
<keyword id="KW-1185">Reference proteome</keyword>
<keyword id="KW-0747">Spliceosome</keyword>
<keyword id="KW-0862">Zinc</keyword>
<keyword id="KW-0863">Zinc-finger</keyword>
<feature type="chain" id="PRO_0000055895" description="Pre-mRNA-splicing factor CWC24">
    <location>
        <begin position="1"/>
        <end position="259"/>
    </location>
</feature>
<feature type="zinc finger region" description="C3H1-type" evidence="2">
    <location>
        <begin position="138"/>
        <end position="166"/>
    </location>
</feature>
<feature type="zinc finger region" description="RING-type" evidence="1">
    <location>
        <begin position="199"/>
        <end position="237"/>
    </location>
</feature>
<feature type="region of interest" description="Disordered" evidence="3">
    <location>
        <begin position="1"/>
        <end position="67"/>
    </location>
</feature>
<feature type="compositionally biased region" description="Basic and acidic residues" evidence="3">
    <location>
        <begin position="25"/>
        <end position="39"/>
    </location>
</feature>
<feature type="compositionally biased region" description="Polar residues" evidence="3">
    <location>
        <begin position="47"/>
        <end position="57"/>
    </location>
</feature>
<feature type="compositionally biased region" description="Basic and acidic residues" evidence="3">
    <location>
        <begin position="58"/>
        <end position="67"/>
    </location>
</feature>
<feature type="modified residue" description="Phosphoserine" evidence="9 10 11">
    <location>
        <position position="33"/>
    </location>
</feature>
<feature type="modified residue" description="Phosphoserine" evidence="8 11">
    <location>
        <position position="105"/>
    </location>
</feature>
<reference key="1">
    <citation type="journal article" date="1997" name="Nature">
        <title>The nucleotide sequence of Saccharomyces cerevisiae chromosome XII.</title>
        <authorList>
            <person name="Johnston M."/>
            <person name="Hillier L.W."/>
            <person name="Riles L."/>
            <person name="Albermann K."/>
            <person name="Andre B."/>
            <person name="Ansorge W."/>
            <person name="Benes V."/>
            <person name="Brueckner M."/>
            <person name="Delius H."/>
            <person name="Dubois E."/>
            <person name="Duesterhoeft A."/>
            <person name="Entian K.-D."/>
            <person name="Floeth M."/>
            <person name="Goffeau A."/>
            <person name="Hebling U."/>
            <person name="Heumann K."/>
            <person name="Heuss-Neitzel D."/>
            <person name="Hilbert H."/>
            <person name="Hilger F."/>
            <person name="Kleine K."/>
            <person name="Koetter P."/>
            <person name="Louis E.J."/>
            <person name="Messenguy F."/>
            <person name="Mewes H.-W."/>
            <person name="Miosga T."/>
            <person name="Moestl D."/>
            <person name="Mueller-Auer S."/>
            <person name="Nentwich U."/>
            <person name="Obermaier B."/>
            <person name="Piravandi E."/>
            <person name="Pohl T.M."/>
            <person name="Portetelle D."/>
            <person name="Purnelle B."/>
            <person name="Rechmann S."/>
            <person name="Rieger M."/>
            <person name="Rinke M."/>
            <person name="Rose M."/>
            <person name="Scharfe M."/>
            <person name="Scherens B."/>
            <person name="Scholler P."/>
            <person name="Schwager C."/>
            <person name="Schwarz S."/>
            <person name="Underwood A.P."/>
            <person name="Urrestarazu L.A."/>
            <person name="Vandenbol M."/>
            <person name="Verhasselt P."/>
            <person name="Vierendeels F."/>
            <person name="Voet M."/>
            <person name="Volckaert G."/>
            <person name="Voss H."/>
            <person name="Wambutt R."/>
            <person name="Wedler E."/>
            <person name="Wedler H."/>
            <person name="Zimmermann F.K."/>
            <person name="Zollner A."/>
            <person name="Hani J."/>
            <person name="Hoheisel J.D."/>
        </authorList>
    </citation>
    <scope>NUCLEOTIDE SEQUENCE [LARGE SCALE GENOMIC DNA]</scope>
    <source>
        <strain>ATCC 204508 / S288c</strain>
    </source>
</reference>
<reference key="2">
    <citation type="journal article" date="2014" name="G3 (Bethesda)">
        <title>The reference genome sequence of Saccharomyces cerevisiae: Then and now.</title>
        <authorList>
            <person name="Engel S.R."/>
            <person name="Dietrich F.S."/>
            <person name="Fisk D.G."/>
            <person name="Binkley G."/>
            <person name="Balakrishnan R."/>
            <person name="Costanzo M.C."/>
            <person name="Dwight S.S."/>
            <person name="Hitz B.C."/>
            <person name="Karra K."/>
            <person name="Nash R.S."/>
            <person name="Weng S."/>
            <person name="Wong E.D."/>
            <person name="Lloyd P."/>
            <person name="Skrzypek M.S."/>
            <person name="Miyasato S.R."/>
            <person name="Simison M."/>
            <person name="Cherry J.M."/>
        </authorList>
    </citation>
    <scope>GENOME REANNOTATION</scope>
    <source>
        <strain>ATCC 204508 / S288c</strain>
    </source>
</reference>
<reference key="3">
    <citation type="journal article" date="2002" name="Mol. Cell. Biol.">
        <title>Proteomics analysis reveals stable multiprotein complexes in both fission and budding yeasts containing Myb-related Cdc5p/Cef1p, novel pre-mRNA splicing factors, and snRNAs.</title>
        <authorList>
            <person name="Ohi M.D."/>
            <person name="Link A.J."/>
            <person name="Ren L."/>
            <person name="Jennings J.L."/>
            <person name="McDonald W.H."/>
            <person name="Gould K.L."/>
        </authorList>
    </citation>
    <scope>IDENTIFICATION IN THE CWC COMPLEX</scope>
    <scope>IDENTIFICATION BY MASS SPECTROMETRY</scope>
</reference>
<reference key="4">
    <citation type="journal article" date="2003" name="Nature">
        <title>Global analysis of protein localization in budding yeast.</title>
        <authorList>
            <person name="Huh W.-K."/>
            <person name="Falvo J.V."/>
            <person name="Gerke L.C."/>
            <person name="Carroll A.S."/>
            <person name="Howson R.W."/>
            <person name="Weissman J.S."/>
            <person name="O'Shea E.K."/>
        </authorList>
    </citation>
    <scope>SUBCELLULAR LOCATION [LARGE SCALE ANALYSIS]</scope>
</reference>
<reference key="5">
    <citation type="journal article" date="2003" name="Nature">
        <title>Global analysis of protein expression in yeast.</title>
        <authorList>
            <person name="Ghaemmaghami S."/>
            <person name="Huh W.-K."/>
            <person name="Bower K."/>
            <person name="Howson R.W."/>
            <person name="Belle A."/>
            <person name="Dephoure N."/>
            <person name="O'Shea E.K."/>
            <person name="Weissman J.S."/>
        </authorList>
    </citation>
    <scope>LEVEL OF PROTEIN EXPRESSION [LARGE SCALE ANALYSIS]</scope>
</reference>
<reference key="6">
    <citation type="journal article" date="2007" name="J. Proteome Res.">
        <title>Large-scale phosphorylation analysis of alpha-factor-arrested Saccharomyces cerevisiae.</title>
        <authorList>
            <person name="Li X."/>
            <person name="Gerber S.A."/>
            <person name="Rudner A.D."/>
            <person name="Beausoleil S.A."/>
            <person name="Haas W."/>
            <person name="Villen J."/>
            <person name="Elias J.E."/>
            <person name="Gygi S.P."/>
        </authorList>
    </citation>
    <scope>PHOSPHORYLATION [LARGE SCALE ANALYSIS] AT SER-33</scope>
    <scope>IDENTIFICATION BY MASS SPECTROMETRY [LARGE SCALE ANALYSIS]</scope>
    <source>
        <strain>ADR376</strain>
    </source>
</reference>
<reference key="7">
    <citation type="journal article" date="2007" name="Proc. Natl. Acad. Sci. U.S.A.">
        <title>Analysis of phosphorylation sites on proteins from Saccharomyces cerevisiae by electron transfer dissociation (ETD) mass spectrometry.</title>
        <authorList>
            <person name="Chi A."/>
            <person name="Huttenhower C."/>
            <person name="Geer L.Y."/>
            <person name="Coon J.J."/>
            <person name="Syka J.E.P."/>
            <person name="Bai D.L."/>
            <person name="Shabanowitz J."/>
            <person name="Burke D.J."/>
            <person name="Troyanskaya O.G."/>
            <person name="Hunt D.F."/>
        </authorList>
    </citation>
    <scope>PHOSPHORYLATION [LARGE SCALE ANALYSIS] AT SER-105</scope>
    <scope>IDENTIFICATION BY MASS SPECTROMETRY [LARGE SCALE ANALYSIS]</scope>
</reference>
<reference key="8">
    <citation type="journal article" date="2008" name="Mol. Cell. Proteomics">
        <title>A multidimensional chromatography technology for in-depth phosphoproteome analysis.</title>
        <authorList>
            <person name="Albuquerque C.P."/>
            <person name="Smolka M.B."/>
            <person name="Payne S.H."/>
            <person name="Bafna V."/>
            <person name="Eng J."/>
            <person name="Zhou H."/>
        </authorList>
    </citation>
    <scope>PHOSPHORYLATION [LARGE SCALE ANALYSIS] AT SER-33</scope>
    <scope>IDENTIFICATION BY MASS SPECTROMETRY [LARGE SCALE ANALYSIS]</scope>
</reference>
<reference key="9">
    <citation type="journal article" date="2009" name="Science">
        <title>Global analysis of Cdk1 substrate phosphorylation sites provides insights into evolution.</title>
        <authorList>
            <person name="Holt L.J."/>
            <person name="Tuch B.B."/>
            <person name="Villen J."/>
            <person name="Johnson A.D."/>
            <person name="Gygi S.P."/>
            <person name="Morgan D.O."/>
        </authorList>
    </citation>
    <scope>PHOSPHORYLATION [LARGE SCALE ANALYSIS] AT SER-33 AND SER-105</scope>
    <scope>IDENTIFICATION BY MASS SPECTROMETRY [LARGE SCALE ANALYSIS]</scope>
</reference>
<dbReference type="EMBL" id="U20618">
    <property type="protein sequence ID" value="AAB64511.1"/>
    <property type="molecule type" value="Genomic_DNA"/>
</dbReference>
<dbReference type="EMBL" id="BK006945">
    <property type="protein sequence ID" value="DAA09631.1"/>
    <property type="molecule type" value="Genomic_DNA"/>
</dbReference>
<dbReference type="PIR" id="S53400">
    <property type="entry name" value="S53400"/>
</dbReference>
<dbReference type="RefSeq" id="NP_013427.1">
    <property type="nucleotide sequence ID" value="NM_001182212.1"/>
</dbReference>
<dbReference type="PDB" id="5GM6">
    <property type="method" value="EM"/>
    <property type="resolution" value="3.50 A"/>
    <property type="chains" value="a=1-259"/>
</dbReference>
<dbReference type="PDBsum" id="5GM6"/>
<dbReference type="EMDB" id="EMD-9524"/>
<dbReference type="SMR" id="P53769"/>
<dbReference type="BioGRID" id="31586">
    <property type="interactions" value="334"/>
</dbReference>
<dbReference type="ComplexPortal" id="CPX-1651">
    <property type="entry name" value="PRP19-associated complex"/>
</dbReference>
<dbReference type="DIP" id="DIP-1391N"/>
<dbReference type="FunCoup" id="P53769">
    <property type="interactions" value="358"/>
</dbReference>
<dbReference type="IntAct" id="P53769">
    <property type="interactions" value="8"/>
</dbReference>
<dbReference type="MINT" id="P53769"/>
<dbReference type="STRING" id="4932.YLR323C"/>
<dbReference type="iPTMnet" id="P53769"/>
<dbReference type="PaxDb" id="4932-YLR323C"/>
<dbReference type="PeptideAtlas" id="P53769"/>
<dbReference type="EnsemblFungi" id="YLR323C_mRNA">
    <property type="protein sequence ID" value="YLR323C"/>
    <property type="gene ID" value="YLR323C"/>
</dbReference>
<dbReference type="GeneID" id="851033"/>
<dbReference type="KEGG" id="sce:YLR323C"/>
<dbReference type="AGR" id="SGD:S000004315"/>
<dbReference type="SGD" id="S000004315">
    <property type="gene designation" value="CWC24"/>
</dbReference>
<dbReference type="VEuPathDB" id="FungiDB:YLR323C"/>
<dbReference type="eggNOG" id="KOG1813">
    <property type="taxonomic scope" value="Eukaryota"/>
</dbReference>
<dbReference type="GeneTree" id="ENSGT00390000016292"/>
<dbReference type="HOGENOM" id="CLU_050460_3_0_1"/>
<dbReference type="InParanoid" id="P53769"/>
<dbReference type="OMA" id="FARDECK"/>
<dbReference type="OrthoDB" id="25761at2759"/>
<dbReference type="BioCyc" id="YEAST:G3O-32406-MONOMER"/>
<dbReference type="BioGRID-ORCS" id="851033">
    <property type="hits" value="2 hits in 10 CRISPR screens"/>
</dbReference>
<dbReference type="PRO" id="PR:P53769"/>
<dbReference type="Proteomes" id="UP000002311">
    <property type="component" value="Chromosome XII"/>
</dbReference>
<dbReference type="RNAct" id="P53769">
    <property type="molecule type" value="protein"/>
</dbReference>
<dbReference type="GO" id="GO:0005634">
    <property type="term" value="C:nucleus"/>
    <property type="evidence" value="ECO:0000314"/>
    <property type="project" value="SGD"/>
</dbReference>
<dbReference type="GO" id="GO:0000974">
    <property type="term" value="C:Prp19 complex"/>
    <property type="evidence" value="ECO:0000353"/>
    <property type="project" value="ComplexPortal"/>
</dbReference>
<dbReference type="GO" id="GO:0005681">
    <property type="term" value="C:spliceosomal complex"/>
    <property type="evidence" value="ECO:0000353"/>
    <property type="project" value="SGD"/>
</dbReference>
<dbReference type="GO" id="GO:0005684">
    <property type="term" value="C:U2-type spliceosomal complex"/>
    <property type="evidence" value="ECO:0000314"/>
    <property type="project" value="SGD"/>
</dbReference>
<dbReference type="GO" id="GO:0003677">
    <property type="term" value="F:DNA binding"/>
    <property type="evidence" value="ECO:0007669"/>
    <property type="project" value="UniProtKB-KW"/>
</dbReference>
<dbReference type="GO" id="GO:0008270">
    <property type="term" value="F:zinc ion binding"/>
    <property type="evidence" value="ECO:0007669"/>
    <property type="project" value="UniProtKB-KW"/>
</dbReference>
<dbReference type="GO" id="GO:0000349">
    <property type="term" value="P:generation of catalytic spliceosome for first transesterification step"/>
    <property type="evidence" value="ECO:0000315"/>
    <property type="project" value="SGD"/>
</dbReference>
<dbReference type="GO" id="GO:0000398">
    <property type="term" value="P:mRNA splicing, via spliceosome"/>
    <property type="evidence" value="ECO:0000315"/>
    <property type="project" value="SGD"/>
</dbReference>
<dbReference type="GO" id="GO:0034247">
    <property type="term" value="P:snoRNA splicing"/>
    <property type="evidence" value="ECO:0000315"/>
    <property type="project" value="SGD"/>
</dbReference>
<dbReference type="CDD" id="cd16539">
    <property type="entry name" value="RING-HC_RNF113A_B"/>
    <property type="match status" value="1"/>
</dbReference>
<dbReference type="FunFam" id="4.10.1000.10:FF:000041">
    <property type="entry name" value="Pre-mRNA-splicing factor CWC24"/>
    <property type="match status" value="1"/>
</dbReference>
<dbReference type="Gene3D" id="4.10.1000.10">
    <property type="entry name" value="Zinc finger, CCCH-type"/>
    <property type="match status" value="1"/>
</dbReference>
<dbReference type="Gene3D" id="3.30.40.10">
    <property type="entry name" value="Zinc/RING finger domain, C3HC4 (zinc finger)"/>
    <property type="match status" value="1"/>
</dbReference>
<dbReference type="InterPro" id="IPR039971">
    <property type="entry name" value="CWC24-like"/>
</dbReference>
<dbReference type="InterPro" id="IPR000571">
    <property type="entry name" value="Znf_CCCH"/>
</dbReference>
<dbReference type="InterPro" id="IPR036855">
    <property type="entry name" value="Znf_CCCH_sf"/>
</dbReference>
<dbReference type="InterPro" id="IPR001841">
    <property type="entry name" value="Znf_RING"/>
</dbReference>
<dbReference type="InterPro" id="IPR013083">
    <property type="entry name" value="Znf_RING/FYVE/PHD"/>
</dbReference>
<dbReference type="PANTHER" id="PTHR12930:SF0">
    <property type="entry name" value="RING FINGER PROTEIN 113B"/>
    <property type="match status" value="1"/>
</dbReference>
<dbReference type="PANTHER" id="PTHR12930">
    <property type="entry name" value="ZINC FINGER PROTEIN 183"/>
    <property type="match status" value="1"/>
</dbReference>
<dbReference type="Pfam" id="PF13923">
    <property type="entry name" value="zf-C3HC4_2"/>
    <property type="match status" value="1"/>
</dbReference>
<dbReference type="Pfam" id="PF00642">
    <property type="entry name" value="zf-CCCH"/>
    <property type="match status" value="1"/>
</dbReference>
<dbReference type="SMART" id="SM00184">
    <property type="entry name" value="RING"/>
    <property type="match status" value="1"/>
</dbReference>
<dbReference type="SMART" id="SM00356">
    <property type="entry name" value="ZnF_C3H1"/>
    <property type="match status" value="1"/>
</dbReference>
<dbReference type="SUPFAM" id="SSF90229">
    <property type="entry name" value="CCCH zinc finger"/>
    <property type="match status" value="1"/>
</dbReference>
<dbReference type="SUPFAM" id="SSF57850">
    <property type="entry name" value="RING/U-box"/>
    <property type="match status" value="1"/>
</dbReference>
<dbReference type="PROSITE" id="PS50103">
    <property type="entry name" value="ZF_C3H1"/>
    <property type="match status" value="1"/>
</dbReference>
<dbReference type="PROSITE" id="PS50089">
    <property type="entry name" value="ZF_RING_2"/>
    <property type="match status" value="1"/>
</dbReference>
<comment type="function">
    <text>Involved in pre-mRNA splicing.</text>
</comment>
<comment type="subunit">
    <text evidence="4">Belongs to the CWC complex (or CEF1-associated complex), a spliceosome sub-complex reminiscent of a late-stage spliceosome composed of the U2, U5 and U6 snRNAs and at least BUD13, BUD31, BRR2, CDC40, CEF1, CLF1, CUS1, CWC2, CWC15, CWC21, CWC22, CWC23, CWC24, CWC25, CWC27, ECM2, HSH155, IST3, ISY1, LEA1, MSL1, NTC20, PRP8, PRP9, PRP11, PRP19, PRP21, PRP22, PRP45, PRP46, SLU7, SMB1, SMD1, SMD2, SMD3, SMX2, SMX3, SNT309, SNU114, SPP2, SYF1, SYF2, RSE1 and YJU2.</text>
</comment>
<comment type="subcellular location">
    <subcellularLocation>
        <location evidence="5">Nucleus</location>
    </subcellularLocation>
</comment>
<comment type="miscellaneous">
    <text evidence="6">Present with 996 molecules/cell in log phase SD medium.</text>
</comment>
<comment type="similarity">
    <text evidence="7">Belongs to the CWC24 family.</text>
</comment>
<organism>
    <name type="scientific">Saccharomyces cerevisiae (strain ATCC 204508 / S288c)</name>
    <name type="common">Baker's yeast</name>
    <dbReference type="NCBI Taxonomy" id="559292"/>
    <lineage>
        <taxon>Eukaryota</taxon>
        <taxon>Fungi</taxon>
        <taxon>Dikarya</taxon>
        <taxon>Ascomycota</taxon>
        <taxon>Saccharomycotina</taxon>
        <taxon>Saccharomycetes</taxon>
        <taxon>Saccharomycetales</taxon>
        <taxon>Saccharomycetaceae</taxon>
        <taxon>Saccharomyces</taxon>
    </lineage>
</organism>
<accession>P53769</accession>
<accession>D6VYW5</accession>